<accession>B1X8A5</accession>
<organism>
    <name type="scientific">Escherichia coli (strain K12 / DH10B)</name>
    <dbReference type="NCBI Taxonomy" id="316385"/>
    <lineage>
        <taxon>Bacteria</taxon>
        <taxon>Pseudomonadati</taxon>
        <taxon>Pseudomonadota</taxon>
        <taxon>Gammaproteobacteria</taxon>
        <taxon>Enterobacterales</taxon>
        <taxon>Enterobacteriaceae</taxon>
        <taxon>Escherichia</taxon>
    </lineage>
</organism>
<gene>
    <name evidence="1" type="primary">eco</name>
    <name type="ordered locus">ECDH10B_2366</name>
</gene>
<keyword id="KW-1015">Disulfide bond</keyword>
<keyword id="KW-0574">Periplasm</keyword>
<keyword id="KW-0646">Protease inhibitor</keyword>
<keyword id="KW-0722">Serine protease inhibitor</keyword>
<keyword id="KW-0732">Signal</keyword>
<feature type="signal peptide" evidence="1">
    <location>
        <begin position="1"/>
        <end position="20"/>
    </location>
</feature>
<feature type="chain" id="PRO_1000132359" description="Ecotin">
    <location>
        <begin position="21"/>
        <end position="162"/>
    </location>
</feature>
<feature type="site" description="Reactive bond" evidence="1">
    <location>
        <begin position="104"/>
        <end position="105"/>
    </location>
</feature>
<feature type="disulfide bond" evidence="1">
    <location>
        <begin position="70"/>
        <end position="107"/>
    </location>
</feature>
<sequence>MKTILPAVLFAAFATTSAWAAESVQPLEKIAPYPQAEKGMKRQVIQLTPQEDESTLKVELLIGQTLEVDCNLHRLGGKLENKTLEGWGYDYYVFDKVSSPVSTMMACPDGKKEKKFVTAYLGDAGMLRYNSKLPIVVYTPDNVDVKYRVWKAEEKIDNAVVR</sequence>
<comment type="function">
    <text evidence="1">General inhibitor of pancreatic serine proteases: inhibits chymotrypsin, trypsin, elastases, factor X, kallikrein as well as a variety of other proteases.</text>
</comment>
<comment type="subunit">
    <text evidence="1">Homodimer.</text>
</comment>
<comment type="subcellular location">
    <subcellularLocation>
        <location evidence="1">Periplasm</location>
    </subcellularLocation>
</comment>
<comment type="similarity">
    <text evidence="1">Belongs to the protease inhibitor I11 (ecotin) family.</text>
</comment>
<evidence type="ECO:0000255" key="1">
    <source>
        <dbReference type="HAMAP-Rule" id="MF_00706"/>
    </source>
</evidence>
<proteinExistence type="inferred from homology"/>
<name>ECOT_ECODH</name>
<dbReference type="EMBL" id="CP000948">
    <property type="protein sequence ID" value="ACB03371.1"/>
    <property type="molecule type" value="Genomic_DNA"/>
</dbReference>
<dbReference type="SMR" id="B1X8A5"/>
<dbReference type="MEROPS" id="I11.001"/>
<dbReference type="KEGG" id="ecd:ECDH10B_2366"/>
<dbReference type="HOGENOM" id="CLU_111565_0_0_6"/>
<dbReference type="GO" id="GO:0042597">
    <property type="term" value="C:periplasmic space"/>
    <property type="evidence" value="ECO:0007669"/>
    <property type="project" value="UniProtKB-SubCell"/>
</dbReference>
<dbReference type="GO" id="GO:0004867">
    <property type="term" value="F:serine-type endopeptidase inhibitor activity"/>
    <property type="evidence" value="ECO:0007669"/>
    <property type="project" value="UniProtKB-UniRule"/>
</dbReference>
<dbReference type="CDD" id="cd00242">
    <property type="entry name" value="Ecotin"/>
    <property type="match status" value="1"/>
</dbReference>
<dbReference type="FunFam" id="2.60.40.550:FF:000001">
    <property type="entry name" value="Ecotin"/>
    <property type="match status" value="1"/>
</dbReference>
<dbReference type="FunFam" id="4.10.1230.10:FF:000001">
    <property type="entry name" value="Ecotin"/>
    <property type="match status" value="1"/>
</dbReference>
<dbReference type="Gene3D" id="2.60.40.550">
    <property type="entry name" value="Ecotin"/>
    <property type="match status" value="1"/>
</dbReference>
<dbReference type="Gene3D" id="4.10.1230.10">
    <property type="entry name" value="Ecotin, trypsin inhibitor"/>
    <property type="match status" value="1"/>
</dbReference>
<dbReference type="HAMAP" id="MF_00706">
    <property type="entry name" value="Ecotin"/>
    <property type="match status" value="1"/>
</dbReference>
<dbReference type="InterPro" id="IPR027438">
    <property type="entry name" value="Ecotin_C"/>
</dbReference>
<dbReference type="InterPro" id="IPR036198">
    <property type="entry name" value="Ecotin_sf"/>
</dbReference>
<dbReference type="InterPro" id="IPR005658">
    <property type="entry name" value="Prot_inh_ecotin"/>
</dbReference>
<dbReference type="InterPro" id="IPR023084">
    <property type="entry name" value="Prot_inh_ecotin_gammaproteobac"/>
</dbReference>
<dbReference type="NCBIfam" id="NF002987">
    <property type="entry name" value="PRK03719.1"/>
    <property type="match status" value="1"/>
</dbReference>
<dbReference type="PANTHER" id="PTHR35890">
    <property type="match status" value="1"/>
</dbReference>
<dbReference type="PANTHER" id="PTHR35890:SF3">
    <property type="entry name" value="ECOTIN"/>
    <property type="match status" value="1"/>
</dbReference>
<dbReference type="Pfam" id="PF03974">
    <property type="entry name" value="Ecotin"/>
    <property type="match status" value="1"/>
</dbReference>
<dbReference type="PIRSF" id="PIRSF006865">
    <property type="entry name" value="Prot_inh_ecotin"/>
    <property type="match status" value="1"/>
</dbReference>
<dbReference type="SUPFAM" id="SSF49772">
    <property type="entry name" value="Ecotin, trypsin inhibitor"/>
    <property type="match status" value="1"/>
</dbReference>
<protein>
    <recommendedName>
        <fullName evidence="1">Ecotin</fullName>
    </recommendedName>
</protein>
<reference key="1">
    <citation type="journal article" date="2008" name="J. Bacteriol.">
        <title>The complete genome sequence of Escherichia coli DH10B: insights into the biology of a laboratory workhorse.</title>
        <authorList>
            <person name="Durfee T."/>
            <person name="Nelson R."/>
            <person name="Baldwin S."/>
            <person name="Plunkett G. III"/>
            <person name="Burland V."/>
            <person name="Mau B."/>
            <person name="Petrosino J.F."/>
            <person name="Qin X."/>
            <person name="Muzny D.M."/>
            <person name="Ayele M."/>
            <person name="Gibbs R.A."/>
            <person name="Csorgo B."/>
            <person name="Posfai G."/>
            <person name="Weinstock G.M."/>
            <person name="Blattner F.R."/>
        </authorList>
    </citation>
    <scope>NUCLEOTIDE SEQUENCE [LARGE SCALE GENOMIC DNA]</scope>
    <source>
        <strain>K12 / DH10B</strain>
    </source>
</reference>